<dbReference type="EC" id="4.1.1.49" evidence="1"/>
<dbReference type="EMBL" id="CP001164">
    <property type="protein sequence ID" value="ACI38194.1"/>
    <property type="molecule type" value="Genomic_DNA"/>
</dbReference>
<dbReference type="RefSeq" id="WP_001301499.1">
    <property type="nucleotide sequence ID" value="NC_011353.1"/>
</dbReference>
<dbReference type="SMR" id="B5YTV3"/>
<dbReference type="KEGG" id="ecf:ECH74115_4709"/>
<dbReference type="HOGENOM" id="CLU_018247_0_1_6"/>
<dbReference type="UniPathway" id="UPA00138"/>
<dbReference type="GO" id="GO:0005829">
    <property type="term" value="C:cytosol"/>
    <property type="evidence" value="ECO:0007669"/>
    <property type="project" value="TreeGrafter"/>
</dbReference>
<dbReference type="GO" id="GO:0005524">
    <property type="term" value="F:ATP binding"/>
    <property type="evidence" value="ECO:0007669"/>
    <property type="project" value="UniProtKB-UniRule"/>
</dbReference>
<dbReference type="GO" id="GO:0046872">
    <property type="term" value="F:metal ion binding"/>
    <property type="evidence" value="ECO:0007669"/>
    <property type="project" value="UniProtKB-KW"/>
</dbReference>
<dbReference type="GO" id="GO:0004612">
    <property type="term" value="F:phosphoenolpyruvate carboxykinase (ATP) activity"/>
    <property type="evidence" value="ECO:0007669"/>
    <property type="project" value="UniProtKB-UniRule"/>
</dbReference>
<dbReference type="GO" id="GO:0006094">
    <property type="term" value="P:gluconeogenesis"/>
    <property type="evidence" value="ECO:0007669"/>
    <property type="project" value="UniProtKB-UniRule"/>
</dbReference>
<dbReference type="CDD" id="cd00484">
    <property type="entry name" value="PEPCK_ATP"/>
    <property type="match status" value="1"/>
</dbReference>
<dbReference type="FunFam" id="2.170.8.10:FF:000001">
    <property type="entry name" value="Phosphoenolpyruvate carboxykinase (ATP)"/>
    <property type="match status" value="1"/>
</dbReference>
<dbReference type="FunFam" id="3.40.449.10:FF:000001">
    <property type="entry name" value="Phosphoenolpyruvate carboxykinase (ATP)"/>
    <property type="match status" value="1"/>
</dbReference>
<dbReference type="Gene3D" id="3.90.228.20">
    <property type="match status" value="1"/>
</dbReference>
<dbReference type="Gene3D" id="3.40.449.10">
    <property type="entry name" value="Phosphoenolpyruvate Carboxykinase, domain 1"/>
    <property type="match status" value="1"/>
</dbReference>
<dbReference type="Gene3D" id="2.170.8.10">
    <property type="entry name" value="Phosphoenolpyruvate Carboxykinase, domain 2"/>
    <property type="match status" value="1"/>
</dbReference>
<dbReference type="HAMAP" id="MF_00453">
    <property type="entry name" value="PEPCK_ATP"/>
    <property type="match status" value="1"/>
</dbReference>
<dbReference type="InterPro" id="IPR001272">
    <property type="entry name" value="PEP_carboxykinase_ATP"/>
</dbReference>
<dbReference type="InterPro" id="IPR013035">
    <property type="entry name" value="PEP_carboxykinase_C"/>
</dbReference>
<dbReference type="InterPro" id="IPR008210">
    <property type="entry name" value="PEP_carboxykinase_N"/>
</dbReference>
<dbReference type="InterPro" id="IPR015994">
    <property type="entry name" value="PEPCK_ATP_CS"/>
</dbReference>
<dbReference type="NCBIfam" id="TIGR00224">
    <property type="entry name" value="pckA"/>
    <property type="match status" value="1"/>
</dbReference>
<dbReference type="NCBIfam" id="NF006819">
    <property type="entry name" value="PRK09344.1-1"/>
    <property type="match status" value="1"/>
</dbReference>
<dbReference type="NCBIfam" id="NF006820">
    <property type="entry name" value="PRK09344.1-2"/>
    <property type="match status" value="1"/>
</dbReference>
<dbReference type="NCBIfam" id="NF006821">
    <property type="entry name" value="PRK09344.1-3"/>
    <property type="match status" value="1"/>
</dbReference>
<dbReference type="PANTHER" id="PTHR30031:SF0">
    <property type="entry name" value="PHOSPHOENOLPYRUVATE CARBOXYKINASE (ATP)"/>
    <property type="match status" value="1"/>
</dbReference>
<dbReference type="PANTHER" id="PTHR30031">
    <property type="entry name" value="PHOSPHOENOLPYRUVATE CARBOXYKINASE ATP"/>
    <property type="match status" value="1"/>
</dbReference>
<dbReference type="Pfam" id="PF01293">
    <property type="entry name" value="PEPCK_ATP"/>
    <property type="match status" value="1"/>
</dbReference>
<dbReference type="PIRSF" id="PIRSF006294">
    <property type="entry name" value="PEP_crbxkin"/>
    <property type="match status" value="1"/>
</dbReference>
<dbReference type="SUPFAM" id="SSF68923">
    <property type="entry name" value="PEP carboxykinase N-terminal domain"/>
    <property type="match status" value="1"/>
</dbReference>
<dbReference type="SUPFAM" id="SSF53795">
    <property type="entry name" value="PEP carboxykinase-like"/>
    <property type="match status" value="1"/>
</dbReference>
<dbReference type="PROSITE" id="PS00532">
    <property type="entry name" value="PEPCK_ATP"/>
    <property type="match status" value="1"/>
</dbReference>
<sequence>MRVNNGLTPQELEAYGISDVHDIVYNPSYDLLYQEELDPSLTGYERGVLTNLGAVAVDTGIFTGRSPKDKYIVRDDTTRDTFWWADKGKGKNDNKPLSPETWQHLKGLVTKQLSGKRLFVVDAFCGANPDTRLSVRFITEVAWQAHFVKNMFIRPSDEELAGFKPDFIVMNGAKCTNPQWKEQGLNSENFVAFNLTERMQLIGGTWYGGEMKKGMFSMMNYLLPLKGIASMHCSANVSEKGDVAVFFGLSGTGKTTLSTDPKRRLIGDDEHGWDDDGVFNFEGGCYAKTIKLSKEAEPEIYNAIRRDALLENVTVREDGTIDFDDGSKTENTRVSYPIYHIDNIVKPVSKAGHATKVIFLTADAFGVLPPVSRLTADQTQYHFLSGFTAKLAGTERGITEPTPTFSACFGAAFLSLHPTQYAEVLVKRMQAAGAQAYLVNTGWNGTGKRISIKDTRAIIDAILNGSLDNAETFTLPMFNLAIPTELPGVDTKILDPRNTYASPEQWQEKAETLAKLFIDNFDKYTDTPAGAALVAAGPKL</sequence>
<protein>
    <recommendedName>
        <fullName evidence="1">Phosphoenolpyruvate carboxykinase (ATP)</fullName>
        <shortName evidence="1">PCK</shortName>
        <shortName evidence="1">PEP carboxykinase</shortName>
        <shortName evidence="1">PEPCK</shortName>
        <ecNumber evidence="1">4.1.1.49</ecNumber>
    </recommendedName>
</protein>
<accession>B5YTV3</accession>
<proteinExistence type="inferred from homology"/>
<organism>
    <name type="scientific">Escherichia coli O157:H7 (strain EC4115 / EHEC)</name>
    <dbReference type="NCBI Taxonomy" id="444450"/>
    <lineage>
        <taxon>Bacteria</taxon>
        <taxon>Pseudomonadati</taxon>
        <taxon>Pseudomonadota</taxon>
        <taxon>Gammaproteobacteria</taxon>
        <taxon>Enterobacterales</taxon>
        <taxon>Enterobacteriaceae</taxon>
        <taxon>Escherichia</taxon>
    </lineage>
</organism>
<reference key="1">
    <citation type="journal article" date="2011" name="Proc. Natl. Acad. Sci. U.S.A.">
        <title>Genomic anatomy of Escherichia coli O157:H7 outbreaks.</title>
        <authorList>
            <person name="Eppinger M."/>
            <person name="Mammel M.K."/>
            <person name="Leclerc J.E."/>
            <person name="Ravel J."/>
            <person name="Cebula T.A."/>
        </authorList>
    </citation>
    <scope>NUCLEOTIDE SEQUENCE [LARGE SCALE GENOMIC DNA]</scope>
    <source>
        <strain>EC4115 / EHEC</strain>
    </source>
</reference>
<name>PCKA_ECO5E</name>
<evidence type="ECO:0000255" key="1">
    <source>
        <dbReference type="HAMAP-Rule" id="MF_00453"/>
    </source>
</evidence>
<feature type="chain" id="PRO_1000125061" description="Phosphoenolpyruvate carboxykinase (ATP)">
    <location>
        <begin position="1"/>
        <end position="540"/>
    </location>
</feature>
<feature type="binding site" evidence="1">
    <location>
        <position position="65"/>
    </location>
    <ligand>
        <name>substrate</name>
    </ligand>
</feature>
<feature type="binding site" evidence="1">
    <location>
        <position position="207"/>
    </location>
    <ligand>
        <name>substrate</name>
    </ligand>
</feature>
<feature type="binding site" evidence="1">
    <location>
        <position position="213"/>
    </location>
    <ligand>
        <name>ATP</name>
        <dbReference type="ChEBI" id="CHEBI:30616"/>
    </ligand>
</feature>
<feature type="binding site" evidence="1">
    <location>
        <position position="213"/>
    </location>
    <ligand>
        <name>Mn(2+)</name>
        <dbReference type="ChEBI" id="CHEBI:29035"/>
    </ligand>
</feature>
<feature type="binding site" evidence="1">
    <location>
        <position position="213"/>
    </location>
    <ligand>
        <name>substrate</name>
    </ligand>
</feature>
<feature type="binding site" evidence="1">
    <location>
        <position position="232"/>
    </location>
    <ligand>
        <name>ATP</name>
        <dbReference type="ChEBI" id="CHEBI:30616"/>
    </ligand>
</feature>
<feature type="binding site" evidence="1">
    <location>
        <position position="232"/>
    </location>
    <ligand>
        <name>Mn(2+)</name>
        <dbReference type="ChEBI" id="CHEBI:29035"/>
    </ligand>
</feature>
<feature type="binding site" evidence="1">
    <location>
        <begin position="248"/>
        <end position="256"/>
    </location>
    <ligand>
        <name>ATP</name>
        <dbReference type="ChEBI" id="CHEBI:30616"/>
    </ligand>
</feature>
<feature type="binding site" evidence="1">
    <location>
        <position position="269"/>
    </location>
    <ligand>
        <name>Mn(2+)</name>
        <dbReference type="ChEBI" id="CHEBI:29035"/>
    </ligand>
</feature>
<feature type="binding site" evidence="1">
    <location>
        <position position="297"/>
    </location>
    <ligand>
        <name>ATP</name>
        <dbReference type="ChEBI" id="CHEBI:30616"/>
    </ligand>
</feature>
<feature type="binding site" evidence="1">
    <location>
        <position position="333"/>
    </location>
    <ligand>
        <name>ATP</name>
        <dbReference type="ChEBI" id="CHEBI:30616"/>
    </ligand>
</feature>
<feature type="binding site" evidence="1">
    <location>
        <position position="333"/>
    </location>
    <ligand>
        <name>substrate</name>
    </ligand>
</feature>
<feature type="binding site" evidence="1">
    <location>
        <begin position="449"/>
        <end position="450"/>
    </location>
    <ligand>
        <name>ATP</name>
        <dbReference type="ChEBI" id="CHEBI:30616"/>
    </ligand>
</feature>
<feature type="binding site" evidence="1">
    <location>
        <position position="455"/>
    </location>
    <ligand>
        <name>ATP</name>
        <dbReference type="ChEBI" id="CHEBI:30616"/>
    </ligand>
</feature>
<feature type="modified residue" description="N6-acetyllysine" evidence="1">
    <location>
        <position position="87"/>
    </location>
</feature>
<feature type="modified residue" description="N6-acetyllysine" evidence="1">
    <location>
        <position position="523"/>
    </location>
</feature>
<keyword id="KW-0007">Acetylation</keyword>
<keyword id="KW-0067">ATP-binding</keyword>
<keyword id="KW-0963">Cytoplasm</keyword>
<keyword id="KW-0210">Decarboxylase</keyword>
<keyword id="KW-0312">Gluconeogenesis</keyword>
<keyword id="KW-0456">Lyase</keyword>
<keyword id="KW-0464">Manganese</keyword>
<keyword id="KW-0479">Metal-binding</keyword>
<keyword id="KW-0547">Nucleotide-binding</keyword>
<gene>
    <name evidence="1" type="primary">pckA</name>
    <name type="ordered locus">ECH74115_4709</name>
</gene>
<comment type="function">
    <text evidence="1">Involved in the gluconeogenesis. Catalyzes the conversion of oxaloacetate (OAA) to phosphoenolpyruvate (PEP) through direct phosphoryl transfer between the nucleoside triphosphate and OAA.</text>
</comment>
<comment type="catalytic activity">
    <reaction evidence="1">
        <text>oxaloacetate + ATP = phosphoenolpyruvate + ADP + CO2</text>
        <dbReference type="Rhea" id="RHEA:18617"/>
        <dbReference type="ChEBI" id="CHEBI:16452"/>
        <dbReference type="ChEBI" id="CHEBI:16526"/>
        <dbReference type="ChEBI" id="CHEBI:30616"/>
        <dbReference type="ChEBI" id="CHEBI:58702"/>
        <dbReference type="ChEBI" id="CHEBI:456216"/>
        <dbReference type="EC" id="4.1.1.49"/>
    </reaction>
</comment>
<comment type="cofactor">
    <cofactor evidence="1">
        <name>Mn(2+)</name>
        <dbReference type="ChEBI" id="CHEBI:29035"/>
    </cofactor>
    <text evidence="1">Binds 1 Mn(2+) ion per subunit.</text>
</comment>
<comment type="pathway">
    <text evidence="1">Carbohydrate biosynthesis; gluconeogenesis.</text>
</comment>
<comment type="subunit">
    <text evidence="1">Monomer.</text>
</comment>
<comment type="subcellular location">
    <subcellularLocation>
        <location evidence="1">Cytoplasm</location>
    </subcellularLocation>
</comment>
<comment type="similarity">
    <text evidence="1">Belongs to the phosphoenolpyruvate carboxykinase (ATP) family.</text>
</comment>